<gene>
    <name type="primary">omp</name>
    <name type="ordered locus">RBE_1424</name>
</gene>
<reference key="1">
    <citation type="journal article" date="2006" name="PLoS Genet.">
        <title>Genome sequence of Rickettsia bellii illuminates the role of amoebae in gene exchanges between intracellular pathogens.</title>
        <authorList>
            <person name="Ogata H."/>
            <person name="La Scola B."/>
            <person name="Audic S."/>
            <person name="Renesto P."/>
            <person name="Blanc G."/>
            <person name="Robert C."/>
            <person name="Fournier P.-E."/>
            <person name="Claverie J.-M."/>
            <person name="Raoult D."/>
        </authorList>
    </citation>
    <scope>NUCLEOTIDE SEQUENCE [LARGE SCALE GENOMIC DNA]</scope>
    <source>
        <strain>RML369-C</strain>
    </source>
</reference>
<sequence length="159" mass="16331">MKIISKIIVILLAASMLQACQGPGGMNKQGSGTLIGGTAGALLGSQFGGGTGRLAAVGAGALLGAILGNQIGAGMDEQDRKLAELTSQRALEAAPSGSSVQWRNPDNGNYGTVTPSKAYKNNTGQYCREYTQTVVVGGKQQKAYGTACRQPDGQWQVVN</sequence>
<name>17KD_RICBR</name>
<accession>Q1RGK9</accession>
<dbReference type="EMBL" id="CP000087">
    <property type="protein sequence ID" value="ABE05505.1"/>
    <property type="molecule type" value="Genomic_DNA"/>
</dbReference>
<dbReference type="RefSeq" id="WP_011478074.1">
    <property type="nucleotide sequence ID" value="NC_007940.1"/>
</dbReference>
<dbReference type="KEGG" id="rbe:RBE_1424"/>
<dbReference type="eggNOG" id="COG4520">
    <property type="taxonomic scope" value="Bacteria"/>
</dbReference>
<dbReference type="HOGENOM" id="CLU_118535_0_0_5"/>
<dbReference type="OrthoDB" id="5402098at2"/>
<dbReference type="Proteomes" id="UP000001951">
    <property type="component" value="Chromosome"/>
</dbReference>
<dbReference type="GO" id="GO:0009279">
    <property type="term" value="C:cell outer membrane"/>
    <property type="evidence" value="ECO:0007669"/>
    <property type="project" value="UniProtKB-SubCell"/>
</dbReference>
<dbReference type="InterPro" id="IPR032635">
    <property type="entry name" value="Anti_2"/>
</dbReference>
<dbReference type="InterPro" id="IPR051407">
    <property type="entry name" value="Bact_OM_lipoprot/Surf_antigen"/>
</dbReference>
<dbReference type="InterPro" id="IPR008816">
    <property type="entry name" value="Gly_zipper_2TM_dom"/>
</dbReference>
<dbReference type="InterPro" id="IPR016364">
    <property type="entry name" value="Surface_antigen_Rickettsia"/>
</dbReference>
<dbReference type="PANTHER" id="PTHR35603">
    <property type="match status" value="1"/>
</dbReference>
<dbReference type="PANTHER" id="PTHR35603:SF2">
    <property type="entry name" value="OUTER MEMBRANE LIPOPROTEIN"/>
    <property type="match status" value="1"/>
</dbReference>
<dbReference type="Pfam" id="PF16998">
    <property type="entry name" value="17kDa_Anti_2"/>
    <property type="match status" value="1"/>
</dbReference>
<dbReference type="Pfam" id="PF05433">
    <property type="entry name" value="Rick_17kDa_Anti"/>
    <property type="match status" value="1"/>
</dbReference>
<dbReference type="PIRSF" id="PIRSF002721">
    <property type="entry name" value="Surface_antigen_Rickettsia"/>
    <property type="match status" value="1"/>
</dbReference>
<dbReference type="PROSITE" id="PS51257">
    <property type="entry name" value="PROKAR_LIPOPROTEIN"/>
    <property type="match status" value="1"/>
</dbReference>
<keyword id="KW-0998">Cell outer membrane</keyword>
<keyword id="KW-0449">Lipoprotein</keyword>
<keyword id="KW-0472">Membrane</keyword>
<keyword id="KW-0564">Palmitate</keyword>
<keyword id="KW-0732">Signal</keyword>
<organism>
    <name type="scientific">Rickettsia bellii (strain RML369-C)</name>
    <dbReference type="NCBI Taxonomy" id="336407"/>
    <lineage>
        <taxon>Bacteria</taxon>
        <taxon>Pseudomonadati</taxon>
        <taxon>Pseudomonadota</taxon>
        <taxon>Alphaproteobacteria</taxon>
        <taxon>Rickettsiales</taxon>
        <taxon>Rickettsiaceae</taxon>
        <taxon>Rickettsieae</taxon>
        <taxon>Rickettsia</taxon>
        <taxon>belli group</taxon>
    </lineage>
</organism>
<protein>
    <recommendedName>
        <fullName>17 kDa surface antigen</fullName>
    </recommendedName>
</protein>
<evidence type="ECO:0000255" key="1">
    <source>
        <dbReference type="PROSITE-ProRule" id="PRU00303"/>
    </source>
</evidence>
<evidence type="ECO:0000305" key="2"/>
<proteinExistence type="inferred from homology"/>
<comment type="subcellular location">
    <subcellularLocation>
        <location evidence="2">Cell outer membrane</location>
        <topology evidence="2">Lipid-anchor</topology>
    </subcellularLocation>
</comment>
<comment type="similarity">
    <text evidence="2">Belongs to the rickettsiale 17 kDa surface antigen family.</text>
</comment>
<feature type="signal peptide" evidence="1">
    <location>
        <begin position="1"/>
        <end position="19"/>
    </location>
</feature>
<feature type="chain" id="PRO_0000277888" description="17 kDa surface antigen">
    <location>
        <begin position="20"/>
        <end position="159"/>
    </location>
</feature>
<feature type="lipid moiety-binding region" description="N-palmitoyl cysteine" evidence="2">
    <location>
        <position position="20"/>
    </location>
</feature>
<feature type="lipid moiety-binding region" description="S-diacylglycerol cysteine" evidence="2">
    <location>
        <position position="20"/>
    </location>
</feature>